<evidence type="ECO:0000255" key="1">
    <source>
        <dbReference type="HAMAP-Rule" id="MF_01011"/>
    </source>
</evidence>
<dbReference type="EC" id="2.1.1.-" evidence="1"/>
<dbReference type="EC" id="2.1.1.35" evidence="1"/>
<dbReference type="EMBL" id="CP000680">
    <property type="protein sequence ID" value="ABP83599.1"/>
    <property type="molecule type" value="Genomic_DNA"/>
</dbReference>
<dbReference type="SMR" id="A4XQI3"/>
<dbReference type="STRING" id="399739.Pmen_0831"/>
<dbReference type="KEGG" id="pmy:Pmen_0831"/>
<dbReference type="PATRIC" id="fig|399739.8.peg.839"/>
<dbReference type="eggNOG" id="COG2265">
    <property type="taxonomic scope" value="Bacteria"/>
</dbReference>
<dbReference type="HOGENOM" id="CLU_043022_0_0_6"/>
<dbReference type="OrthoDB" id="9804590at2"/>
<dbReference type="GO" id="GO:0005829">
    <property type="term" value="C:cytosol"/>
    <property type="evidence" value="ECO:0007669"/>
    <property type="project" value="TreeGrafter"/>
</dbReference>
<dbReference type="GO" id="GO:0019843">
    <property type="term" value="F:rRNA binding"/>
    <property type="evidence" value="ECO:0007669"/>
    <property type="project" value="TreeGrafter"/>
</dbReference>
<dbReference type="GO" id="GO:0030697">
    <property type="term" value="F:tRNA (uracil(54)-C5)-methyltransferase activity, S-adenosyl methionine-dependent"/>
    <property type="evidence" value="ECO:0007669"/>
    <property type="project" value="UniProtKB-UniRule"/>
</dbReference>
<dbReference type="GO" id="GO:0000049">
    <property type="term" value="F:tRNA binding"/>
    <property type="evidence" value="ECO:0007669"/>
    <property type="project" value="TreeGrafter"/>
</dbReference>
<dbReference type="GO" id="GO:0030488">
    <property type="term" value="P:tRNA methylation"/>
    <property type="evidence" value="ECO:0007669"/>
    <property type="project" value="UniProtKB-UniRule"/>
</dbReference>
<dbReference type="CDD" id="cd02440">
    <property type="entry name" value="AdoMet_MTases"/>
    <property type="match status" value="1"/>
</dbReference>
<dbReference type="FunFam" id="2.40.50.1070:FF:000001">
    <property type="entry name" value="tRNA/tmRNA (uracil-C(5))-methyltransferase"/>
    <property type="match status" value="1"/>
</dbReference>
<dbReference type="FunFam" id="3.40.50.150:FF:000012">
    <property type="entry name" value="tRNA/tmRNA (uracil-C(5))-methyltransferase"/>
    <property type="match status" value="1"/>
</dbReference>
<dbReference type="Gene3D" id="2.40.50.1070">
    <property type="match status" value="1"/>
</dbReference>
<dbReference type="Gene3D" id="3.40.50.150">
    <property type="entry name" value="Vaccinia Virus protein VP39"/>
    <property type="match status" value="1"/>
</dbReference>
<dbReference type="HAMAP" id="MF_01011">
    <property type="entry name" value="RNA_methyltr_TrmA"/>
    <property type="match status" value="1"/>
</dbReference>
<dbReference type="InterPro" id="IPR030390">
    <property type="entry name" value="MeTrfase_TrmA_AS"/>
</dbReference>
<dbReference type="InterPro" id="IPR030391">
    <property type="entry name" value="MeTrfase_TrmA_CS"/>
</dbReference>
<dbReference type="InterPro" id="IPR029063">
    <property type="entry name" value="SAM-dependent_MTases_sf"/>
</dbReference>
<dbReference type="InterPro" id="IPR011869">
    <property type="entry name" value="TrmA_MeTrfase"/>
</dbReference>
<dbReference type="InterPro" id="IPR010280">
    <property type="entry name" value="U5_MeTrfase_fam"/>
</dbReference>
<dbReference type="NCBIfam" id="TIGR02143">
    <property type="entry name" value="trmA_only"/>
    <property type="match status" value="1"/>
</dbReference>
<dbReference type="PANTHER" id="PTHR47790">
    <property type="entry name" value="TRNA/TMRNA (URACIL-C(5))-METHYLTRANSFERASE"/>
    <property type="match status" value="1"/>
</dbReference>
<dbReference type="PANTHER" id="PTHR47790:SF2">
    <property type="entry name" value="TRNA_TMRNA (URACIL-C(5))-METHYLTRANSFERASE"/>
    <property type="match status" value="1"/>
</dbReference>
<dbReference type="Pfam" id="PF05958">
    <property type="entry name" value="tRNA_U5-meth_tr"/>
    <property type="match status" value="1"/>
</dbReference>
<dbReference type="SUPFAM" id="SSF53335">
    <property type="entry name" value="S-adenosyl-L-methionine-dependent methyltransferases"/>
    <property type="match status" value="1"/>
</dbReference>
<dbReference type="PROSITE" id="PS51687">
    <property type="entry name" value="SAM_MT_RNA_M5U"/>
    <property type="match status" value="1"/>
</dbReference>
<dbReference type="PROSITE" id="PS01230">
    <property type="entry name" value="TRMA_1"/>
    <property type="match status" value="1"/>
</dbReference>
<dbReference type="PROSITE" id="PS01231">
    <property type="entry name" value="TRMA_2"/>
    <property type="match status" value="1"/>
</dbReference>
<keyword id="KW-0489">Methyltransferase</keyword>
<keyword id="KW-0949">S-adenosyl-L-methionine</keyword>
<keyword id="KW-0808">Transferase</keyword>
<keyword id="KW-0819">tRNA processing</keyword>
<organism>
    <name type="scientific">Ectopseudomonas mendocina (strain ymp)</name>
    <name type="common">Pseudomonas mendocina</name>
    <dbReference type="NCBI Taxonomy" id="399739"/>
    <lineage>
        <taxon>Bacteria</taxon>
        <taxon>Pseudomonadati</taxon>
        <taxon>Pseudomonadota</taxon>
        <taxon>Gammaproteobacteria</taxon>
        <taxon>Pseudomonadales</taxon>
        <taxon>Pseudomonadaceae</taxon>
        <taxon>Ectopseudomonas</taxon>
    </lineage>
</organism>
<accession>A4XQI3</accession>
<gene>
    <name evidence="1" type="primary">trmA</name>
    <name type="ordered locus">Pmen_0831</name>
</gene>
<sequence>MSAPVFDPATYDAQLAEKQQRLIELLAPFAAPEPEVFDSPREHYRLRAEFRLWREDGQRHYAMFAPGDKHTPILLDDFPIASLRINELMPRLRAAWRASEALSFKLFQVEFLTTLAGDALITLAYHRPLDEAWQAAAEKLASELNVSLVGRSRGQRLVIGRDYVEEELTVAGRRFRYRQPEGAFTQPNGAVCEKMLGWAYEALGERDDDLLELYCGNGNFTLPLATRVRRVLATEISKTSVNAALANLADNGVNNVELVRLSAEELTQALNEVRPFRRLAGIDLKSYDFGSVFVDPPRAGMDPDTCELTRRFERILYISCNPETLAANIAQLSDTHQVTRCALFDQFPYTHHMEAGVLLERR</sequence>
<name>TRMA_ECTM1</name>
<reference key="1">
    <citation type="submission" date="2007-04" db="EMBL/GenBank/DDBJ databases">
        <title>Complete sequence of Pseudomonas mendocina ymp.</title>
        <authorList>
            <consortium name="US DOE Joint Genome Institute"/>
            <person name="Copeland A."/>
            <person name="Lucas S."/>
            <person name="Lapidus A."/>
            <person name="Barry K."/>
            <person name="Glavina del Rio T."/>
            <person name="Dalin E."/>
            <person name="Tice H."/>
            <person name="Pitluck S."/>
            <person name="Kiss H."/>
            <person name="Brettin T."/>
            <person name="Detter J.C."/>
            <person name="Bruce D."/>
            <person name="Han C."/>
            <person name="Schmutz J."/>
            <person name="Larimer F."/>
            <person name="Land M."/>
            <person name="Hauser L."/>
            <person name="Kyrpides N."/>
            <person name="Mikhailova N."/>
            <person name="Hersman L."/>
            <person name="Dubois J."/>
            <person name="Maurice P."/>
            <person name="Richardson P."/>
        </authorList>
    </citation>
    <scope>NUCLEOTIDE SEQUENCE [LARGE SCALE GENOMIC DNA]</scope>
    <source>
        <strain>ymp</strain>
    </source>
</reference>
<proteinExistence type="inferred from homology"/>
<comment type="function">
    <text evidence="1">Dual-specificity methyltransferase that catalyzes the formation of 5-methyluridine at position 54 (m5U54) in all tRNAs, and that of position 341 (m5U341) in tmRNA (transfer-mRNA).</text>
</comment>
<comment type="catalytic activity">
    <reaction evidence="1">
        <text>uridine(54) in tRNA + S-adenosyl-L-methionine = 5-methyluridine(54) in tRNA + S-adenosyl-L-homocysteine + H(+)</text>
        <dbReference type="Rhea" id="RHEA:42712"/>
        <dbReference type="Rhea" id="RHEA-COMP:10167"/>
        <dbReference type="Rhea" id="RHEA-COMP:10193"/>
        <dbReference type="ChEBI" id="CHEBI:15378"/>
        <dbReference type="ChEBI" id="CHEBI:57856"/>
        <dbReference type="ChEBI" id="CHEBI:59789"/>
        <dbReference type="ChEBI" id="CHEBI:65315"/>
        <dbReference type="ChEBI" id="CHEBI:74447"/>
        <dbReference type="EC" id="2.1.1.35"/>
    </reaction>
</comment>
<comment type="catalytic activity">
    <reaction evidence="1">
        <text>uridine(341) in tmRNA + S-adenosyl-L-methionine = 5-methyluridine(341) in tmRNA + S-adenosyl-L-homocysteine + H(+)</text>
        <dbReference type="Rhea" id="RHEA:43612"/>
        <dbReference type="Rhea" id="RHEA-COMP:10630"/>
        <dbReference type="Rhea" id="RHEA-COMP:10631"/>
        <dbReference type="ChEBI" id="CHEBI:15378"/>
        <dbReference type="ChEBI" id="CHEBI:57856"/>
        <dbReference type="ChEBI" id="CHEBI:59789"/>
        <dbReference type="ChEBI" id="CHEBI:65315"/>
        <dbReference type="ChEBI" id="CHEBI:74447"/>
    </reaction>
</comment>
<comment type="similarity">
    <text evidence="1">Belongs to the class I-like SAM-binding methyltransferase superfamily. RNA M5U methyltransferase family. TrmA subfamily.</text>
</comment>
<protein>
    <recommendedName>
        <fullName evidence="1">tRNA/tmRNA (uracil-C(5))-methyltransferase</fullName>
        <ecNumber evidence="1">2.1.1.-</ecNumber>
        <ecNumber evidence="1">2.1.1.35</ecNumber>
    </recommendedName>
    <alternativeName>
        <fullName evidence="1">tRNA (uracil(54)-C(5))-methyltransferase</fullName>
    </alternativeName>
    <alternativeName>
        <fullName evidence="1">tRNA(m5U54)-methyltransferase</fullName>
        <shortName evidence="1">RUMT</shortName>
    </alternativeName>
    <alternativeName>
        <fullName evidence="1">tmRNA (uracil(341)-C(5))-methyltransferase</fullName>
    </alternativeName>
</protein>
<feature type="chain" id="PRO_1000062993" description="tRNA/tmRNA (uracil-C(5))-methyltransferase">
    <location>
        <begin position="1"/>
        <end position="362"/>
    </location>
</feature>
<feature type="active site" description="Nucleophile" evidence="1">
    <location>
        <position position="320"/>
    </location>
</feature>
<feature type="active site" description="Proton acceptor" evidence="1">
    <location>
        <position position="354"/>
    </location>
</feature>
<feature type="binding site" evidence="1">
    <location>
        <position position="186"/>
    </location>
    <ligand>
        <name>S-adenosyl-L-methionine</name>
        <dbReference type="ChEBI" id="CHEBI:59789"/>
    </ligand>
</feature>
<feature type="binding site" evidence="1">
    <location>
        <position position="214"/>
    </location>
    <ligand>
        <name>S-adenosyl-L-methionine</name>
        <dbReference type="ChEBI" id="CHEBI:59789"/>
    </ligand>
</feature>
<feature type="binding site" evidence="1">
    <location>
        <position position="219"/>
    </location>
    <ligand>
        <name>S-adenosyl-L-methionine</name>
        <dbReference type="ChEBI" id="CHEBI:59789"/>
    </ligand>
</feature>
<feature type="binding site" evidence="1">
    <location>
        <position position="235"/>
    </location>
    <ligand>
        <name>S-adenosyl-L-methionine</name>
        <dbReference type="ChEBI" id="CHEBI:59789"/>
    </ligand>
</feature>
<feature type="binding site" evidence="1">
    <location>
        <position position="295"/>
    </location>
    <ligand>
        <name>S-adenosyl-L-methionine</name>
        <dbReference type="ChEBI" id="CHEBI:59789"/>
    </ligand>
</feature>